<feature type="chain" id="PRO_0000268731" description="Monothiol glutaredoxin-S11">
    <location>
        <begin position="1"/>
        <end position="99"/>
    </location>
</feature>
<feature type="domain" description="Glutaredoxin" evidence="3">
    <location>
        <begin position="1"/>
        <end position="99"/>
    </location>
</feature>
<feature type="binding site" evidence="2">
    <location>
        <position position="21"/>
    </location>
    <ligand>
        <name>[2Fe-2S] cluster</name>
        <dbReference type="ChEBI" id="CHEBI:190135"/>
        <note>ligand shared between dimeric partners</note>
    </ligand>
</feature>
<gene>
    <name type="primary">GRXS11</name>
    <name type="synonym">ROXY6</name>
    <name type="ordered locus">At1g06830</name>
    <name type="ORF">F4H5.25</name>
    <name type="ORF">F4H5.9</name>
</gene>
<accession>Q9M9Y9</accession>
<accession>C1JGP7</accession>
<protein>
    <recommendedName>
        <fullName>Monothiol glutaredoxin-S11</fullName>
        <shortName>AtGrxS11</shortName>
    </recommendedName>
    <alternativeName>
        <fullName>Protein ROXY 6</fullName>
    </alternativeName>
</protein>
<keyword id="KW-0001">2Fe-2S</keyword>
<keyword id="KW-0963">Cytoplasm</keyword>
<keyword id="KW-0408">Iron</keyword>
<keyword id="KW-0411">Iron-sulfur</keyword>
<keyword id="KW-0479">Metal-binding</keyword>
<keyword id="KW-0676">Redox-active center</keyword>
<keyword id="KW-1185">Reference proteome</keyword>
<comment type="function">
    <text evidence="4">May only reduce GSH-thiol disulfides, but not protein disulfides.</text>
</comment>
<comment type="subcellular location">
    <subcellularLocation>
        <location evidence="1">Cytoplasm</location>
    </subcellularLocation>
</comment>
<comment type="similarity">
    <text evidence="4">Belongs to the glutaredoxin family. CC-type subfamily.</text>
</comment>
<dbReference type="EMBL" id="FJ611906">
    <property type="protein sequence ID" value="ACO50411.1"/>
    <property type="molecule type" value="mRNA"/>
</dbReference>
<dbReference type="EMBL" id="AC011001">
    <property type="protein sequence ID" value="AAF63150.1"/>
    <property type="molecule type" value="Genomic_DNA"/>
</dbReference>
<dbReference type="EMBL" id="CP002684">
    <property type="protein sequence ID" value="AEE28043.1"/>
    <property type="molecule type" value="Genomic_DNA"/>
</dbReference>
<dbReference type="EMBL" id="AY072366">
    <property type="protein sequence ID" value="AAL62358.1"/>
    <property type="molecule type" value="mRNA"/>
</dbReference>
<dbReference type="EMBL" id="AY114614">
    <property type="protein sequence ID" value="AAM47933.1"/>
    <property type="molecule type" value="mRNA"/>
</dbReference>
<dbReference type="EMBL" id="AY085047">
    <property type="protein sequence ID" value="AAM61604.1"/>
    <property type="molecule type" value="mRNA"/>
</dbReference>
<dbReference type="PIR" id="B86203">
    <property type="entry name" value="B86203"/>
</dbReference>
<dbReference type="RefSeq" id="NP_172168.1">
    <property type="nucleotide sequence ID" value="NM_100560.3"/>
</dbReference>
<dbReference type="SMR" id="Q9M9Y9"/>
<dbReference type="BioGRID" id="22436">
    <property type="interactions" value="1"/>
</dbReference>
<dbReference type="FunCoup" id="Q9M9Y9">
    <property type="interactions" value="60"/>
</dbReference>
<dbReference type="STRING" id="3702.Q9M9Y9"/>
<dbReference type="PaxDb" id="3702-AT1G06830.1"/>
<dbReference type="ProteomicsDB" id="222249"/>
<dbReference type="EnsemblPlants" id="AT1G06830.1">
    <property type="protein sequence ID" value="AT1G06830.1"/>
    <property type="gene ID" value="AT1G06830"/>
</dbReference>
<dbReference type="GeneID" id="837195"/>
<dbReference type="Gramene" id="AT1G06830.1">
    <property type="protein sequence ID" value="AT1G06830.1"/>
    <property type="gene ID" value="AT1G06830"/>
</dbReference>
<dbReference type="KEGG" id="ath:AT1G06830"/>
<dbReference type="Araport" id="AT1G06830"/>
<dbReference type="TAIR" id="AT1G06830">
    <property type="gene designation" value="CEPD1"/>
</dbReference>
<dbReference type="eggNOG" id="KOG1752">
    <property type="taxonomic scope" value="Eukaryota"/>
</dbReference>
<dbReference type="HOGENOM" id="CLU_026126_6_0_1"/>
<dbReference type="InParanoid" id="Q9M9Y9"/>
<dbReference type="OMA" id="MRMGING"/>
<dbReference type="OrthoDB" id="418495at2759"/>
<dbReference type="PhylomeDB" id="Q9M9Y9"/>
<dbReference type="PRO" id="PR:Q9M9Y9"/>
<dbReference type="Proteomes" id="UP000006548">
    <property type="component" value="Chromosome 1"/>
</dbReference>
<dbReference type="ExpressionAtlas" id="Q9M9Y9">
    <property type="expression patterns" value="baseline and differential"/>
</dbReference>
<dbReference type="GO" id="GO:0005737">
    <property type="term" value="C:cytoplasm"/>
    <property type="evidence" value="ECO:0000314"/>
    <property type="project" value="TAIR"/>
</dbReference>
<dbReference type="GO" id="GO:0005634">
    <property type="term" value="C:nucleus"/>
    <property type="evidence" value="ECO:0000314"/>
    <property type="project" value="TAIR"/>
</dbReference>
<dbReference type="GO" id="GO:0051537">
    <property type="term" value="F:2 iron, 2 sulfur cluster binding"/>
    <property type="evidence" value="ECO:0007669"/>
    <property type="project" value="UniProtKB-KW"/>
</dbReference>
<dbReference type="GO" id="GO:0046872">
    <property type="term" value="F:metal ion binding"/>
    <property type="evidence" value="ECO:0007669"/>
    <property type="project" value="UniProtKB-KW"/>
</dbReference>
<dbReference type="GO" id="GO:0006995">
    <property type="term" value="P:cellular response to nitrogen starvation"/>
    <property type="evidence" value="ECO:0000316"/>
    <property type="project" value="TAIR"/>
</dbReference>
<dbReference type="CDD" id="cd03419">
    <property type="entry name" value="GRX_GRXh_1_2_like"/>
    <property type="match status" value="1"/>
</dbReference>
<dbReference type="FunFam" id="3.40.30.10:FF:000028">
    <property type="entry name" value="Glutaredoxin family protein"/>
    <property type="match status" value="1"/>
</dbReference>
<dbReference type="Gene3D" id="3.40.30.10">
    <property type="entry name" value="Glutaredoxin"/>
    <property type="match status" value="1"/>
</dbReference>
<dbReference type="InterPro" id="IPR011905">
    <property type="entry name" value="GlrX-like_pln_2"/>
</dbReference>
<dbReference type="InterPro" id="IPR002109">
    <property type="entry name" value="Glutaredoxin"/>
</dbReference>
<dbReference type="InterPro" id="IPR036249">
    <property type="entry name" value="Thioredoxin-like_sf"/>
</dbReference>
<dbReference type="NCBIfam" id="TIGR02189">
    <property type="entry name" value="GlrX-like_plant"/>
    <property type="match status" value="1"/>
</dbReference>
<dbReference type="PANTHER" id="PTHR10168">
    <property type="entry name" value="GLUTAREDOXIN"/>
    <property type="match status" value="1"/>
</dbReference>
<dbReference type="Pfam" id="PF00462">
    <property type="entry name" value="Glutaredoxin"/>
    <property type="match status" value="1"/>
</dbReference>
<dbReference type="SUPFAM" id="SSF52833">
    <property type="entry name" value="Thioredoxin-like"/>
    <property type="match status" value="1"/>
</dbReference>
<dbReference type="PROSITE" id="PS51354">
    <property type="entry name" value="GLUTAREDOXIN_2"/>
    <property type="match status" value="1"/>
</dbReference>
<proteinExistence type="inferred from homology"/>
<organism>
    <name type="scientific">Arabidopsis thaliana</name>
    <name type="common">Mouse-ear cress</name>
    <dbReference type="NCBI Taxonomy" id="3702"/>
    <lineage>
        <taxon>Eukaryota</taxon>
        <taxon>Viridiplantae</taxon>
        <taxon>Streptophyta</taxon>
        <taxon>Embryophyta</taxon>
        <taxon>Tracheophyta</taxon>
        <taxon>Spermatophyta</taxon>
        <taxon>Magnoliopsida</taxon>
        <taxon>eudicotyledons</taxon>
        <taxon>Gunneridae</taxon>
        <taxon>Pentapetalae</taxon>
        <taxon>rosids</taxon>
        <taxon>malvids</taxon>
        <taxon>Brassicales</taxon>
        <taxon>Brassicaceae</taxon>
        <taxon>Camelineae</taxon>
        <taxon>Arabidopsis</taxon>
    </lineage>
</organism>
<sequence length="99" mass="10890">MDKVMRMSSEKGVVIFTKSSCCLSYAVQVLFQDLGVNPKIHEIDKDPECREIEKALMRLGCSKPVPAVFIGGKLVGSTNEVMSMHLSSSLVPLVKPYLC</sequence>
<evidence type="ECO:0000250" key="1"/>
<evidence type="ECO:0000255" key="2"/>
<evidence type="ECO:0000255" key="3">
    <source>
        <dbReference type="PROSITE-ProRule" id="PRU00686"/>
    </source>
</evidence>
<evidence type="ECO:0000305" key="4"/>
<name>GRS11_ARATH</name>
<reference key="1">
    <citation type="journal article" date="2009" name="Plant Cell">
        <title>Nuclear activity of ROXY1, a glutaredoxin interacting with TGA factors, is required for petal development in Arabidopsis thaliana.</title>
        <authorList>
            <person name="Li S."/>
            <person name="Lauri A."/>
            <person name="Ziemann M."/>
            <person name="Busch A."/>
            <person name="Bhave M."/>
            <person name="Zachgo S."/>
        </authorList>
    </citation>
    <scope>NUCLEOTIDE SEQUENCE [MRNA]</scope>
    <scope>GENE FAMILY</scope>
</reference>
<reference key="2">
    <citation type="journal article" date="2000" name="Nature">
        <title>Sequence and analysis of chromosome 1 of the plant Arabidopsis thaliana.</title>
        <authorList>
            <person name="Theologis A."/>
            <person name="Ecker J.R."/>
            <person name="Palm C.J."/>
            <person name="Federspiel N.A."/>
            <person name="Kaul S."/>
            <person name="White O."/>
            <person name="Alonso J."/>
            <person name="Altafi H."/>
            <person name="Araujo R."/>
            <person name="Bowman C.L."/>
            <person name="Brooks S.Y."/>
            <person name="Buehler E."/>
            <person name="Chan A."/>
            <person name="Chao Q."/>
            <person name="Chen H."/>
            <person name="Cheuk R.F."/>
            <person name="Chin C.W."/>
            <person name="Chung M.K."/>
            <person name="Conn L."/>
            <person name="Conway A.B."/>
            <person name="Conway A.R."/>
            <person name="Creasy T.H."/>
            <person name="Dewar K."/>
            <person name="Dunn P."/>
            <person name="Etgu P."/>
            <person name="Feldblyum T.V."/>
            <person name="Feng J.-D."/>
            <person name="Fong B."/>
            <person name="Fujii C.Y."/>
            <person name="Gill J.E."/>
            <person name="Goldsmith A.D."/>
            <person name="Haas B."/>
            <person name="Hansen N.F."/>
            <person name="Hughes B."/>
            <person name="Huizar L."/>
            <person name="Hunter J.L."/>
            <person name="Jenkins J."/>
            <person name="Johnson-Hopson C."/>
            <person name="Khan S."/>
            <person name="Khaykin E."/>
            <person name="Kim C.J."/>
            <person name="Koo H.L."/>
            <person name="Kremenetskaia I."/>
            <person name="Kurtz D.B."/>
            <person name="Kwan A."/>
            <person name="Lam B."/>
            <person name="Langin-Hooper S."/>
            <person name="Lee A."/>
            <person name="Lee J.M."/>
            <person name="Lenz C.A."/>
            <person name="Li J.H."/>
            <person name="Li Y.-P."/>
            <person name="Lin X."/>
            <person name="Liu S.X."/>
            <person name="Liu Z.A."/>
            <person name="Luros J.S."/>
            <person name="Maiti R."/>
            <person name="Marziali A."/>
            <person name="Militscher J."/>
            <person name="Miranda M."/>
            <person name="Nguyen M."/>
            <person name="Nierman W.C."/>
            <person name="Osborne B.I."/>
            <person name="Pai G."/>
            <person name="Peterson J."/>
            <person name="Pham P.K."/>
            <person name="Rizzo M."/>
            <person name="Rooney T."/>
            <person name="Rowley D."/>
            <person name="Sakano H."/>
            <person name="Salzberg S.L."/>
            <person name="Schwartz J.R."/>
            <person name="Shinn P."/>
            <person name="Southwick A.M."/>
            <person name="Sun H."/>
            <person name="Tallon L.J."/>
            <person name="Tambunga G."/>
            <person name="Toriumi M.J."/>
            <person name="Town C.D."/>
            <person name="Utterback T."/>
            <person name="Van Aken S."/>
            <person name="Vaysberg M."/>
            <person name="Vysotskaia V.S."/>
            <person name="Walker M."/>
            <person name="Wu D."/>
            <person name="Yu G."/>
            <person name="Fraser C.M."/>
            <person name="Venter J.C."/>
            <person name="Davis R.W."/>
        </authorList>
    </citation>
    <scope>NUCLEOTIDE SEQUENCE [LARGE SCALE GENOMIC DNA]</scope>
    <source>
        <strain>cv. Columbia</strain>
    </source>
</reference>
<reference key="3">
    <citation type="journal article" date="2017" name="Plant J.">
        <title>Araport11: a complete reannotation of the Arabidopsis thaliana reference genome.</title>
        <authorList>
            <person name="Cheng C.Y."/>
            <person name="Krishnakumar V."/>
            <person name="Chan A.P."/>
            <person name="Thibaud-Nissen F."/>
            <person name="Schobel S."/>
            <person name="Town C.D."/>
        </authorList>
    </citation>
    <scope>GENOME REANNOTATION</scope>
    <source>
        <strain>cv. Columbia</strain>
    </source>
</reference>
<reference key="4">
    <citation type="journal article" date="2003" name="Science">
        <title>Empirical analysis of transcriptional activity in the Arabidopsis genome.</title>
        <authorList>
            <person name="Yamada K."/>
            <person name="Lim J."/>
            <person name="Dale J.M."/>
            <person name="Chen H."/>
            <person name="Shinn P."/>
            <person name="Palm C.J."/>
            <person name="Southwick A.M."/>
            <person name="Wu H.C."/>
            <person name="Kim C.J."/>
            <person name="Nguyen M."/>
            <person name="Pham P.K."/>
            <person name="Cheuk R.F."/>
            <person name="Karlin-Newmann G."/>
            <person name="Liu S.X."/>
            <person name="Lam B."/>
            <person name="Sakano H."/>
            <person name="Wu T."/>
            <person name="Yu G."/>
            <person name="Miranda M."/>
            <person name="Quach H.L."/>
            <person name="Tripp M."/>
            <person name="Chang C.H."/>
            <person name="Lee J.M."/>
            <person name="Toriumi M.J."/>
            <person name="Chan M.M."/>
            <person name="Tang C.C."/>
            <person name="Onodera C.S."/>
            <person name="Deng J.M."/>
            <person name="Akiyama K."/>
            <person name="Ansari Y."/>
            <person name="Arakawa T."/>
            <person name="Banh J."/>
            <person name="Banno F."/>
            <person name="Bowser L."/>
            <person name="Brooks S.Y."/>
            <person name="Carninci P."/>
            <person name="Chao Q."/>
            <person name="Choy N."/>
            <person name="Enju A."/>
            <person name="Goldsmith A.D."/>
            <person name="Gurjal M."/>
            <person name="Hansen N.F."/>
            <person name="Hayashizaki Y."/>
            <person name="Johnson-Hopson C."/>
            <person name="Hsuan V.W."/>
            <person name="Iida K."/>
            <person name="Karnes M."/>
            <person name="Khan S."/>
            <person name="Koesema E."/>
            <person name="Ishida J."/>
            <person name="Jiang P.X."/>
            <person name="Jones T."/>
            <person name="Kawai J."/>
            <person name="Kamiya A."/>
            <person name="Meyers C."/>
            <person name="Nakajima M."/>
            <person name="Narusaka M."/>
            <person name="Seki M."/>
            <person name="Sakurai T."/>
            <person name="Satou M."/>
            <person name="Tamse R."/>
            <person name="Vaysberg M."/>
            <person name="Wallender E.K."/>
            <person name="Wong C."/>
            <person name="Yamamura Y."/>
            <person name="Yuan S."/>
            <person name="Shinozaki K."/>
            <person name="Davis R.W."/>
            <person name="Theologis A."/>
            <person name="Ecker J.R."/>
        </authorList>
    </citation>
    <scope>NUCLEOTIDE SEQUENCE [LARGE SCALE MRNA]</scope>
    <source>
        <strain>cv. Columbia</strain>
    </source>
</reference>
<reference key="5">
    <citation type="submission" date="2002-03" db="EMBL/GenBank/DDBJ databases">
        <title>Full-length cDNA from Arabidopsis thaliana.</title>
        <authorList>
            <person name="Brover V.V."/>
            <person name="Troukhan M.E."/>
            <person name="Alexandrov N.A."/>
            <person name="Lu Y.-P."/>
            <person name="Flavell R.B."/>
            <person name="Feldmann K.A."/>
        </authorList>
    </citation>
    <scope>NUCLEOTIDE SEQUENCE [LARGE SCALE MRNA]</scope>
</reference>
<reference key="6">
    <citation type="journal article" date="2004" name="Cell. Mol. Life Sci.">
        <title>Plant glutaredoxins: still mysterious reducing systems.</title>
        <authorList>
            <person name="Rouhier N."/>
            <person name="Gelhaye E."/>
            <person name="Jacquot J.-P."/>
        </authorList>
    </citation>
    <scope>GENE FAMILY</scope>
    <scope>NOMENCLATURE</scope>
</reference>
<reference key="7">
    <citation type="journal article" date="2006" name="J. Exp. Bot.">
        <title>Genome-wide analysis of plant glutaredoxin systems.</title>
        <authorList>
            <person name="Rouhier N."/>
            <person name="Couturier J."/>
            <person name="Jacquot J.-P."/>
        </authorList>
    </citation>
    <scope>GENE FAMILY</scope>
</reference>